<protein>
    <recommendedName>
        <fullName>Hemagglutinin</fullName>
    </recommendedName>
    <component>
        <recommendedName>
            <fullName>Hemagglutinin HA1 chain</fullName>
        </recommendedName>
    </component>
</protein>
<dbReference type="EMBL" id="L19644">
    <property type="protein sequence ID" value="AAA50372.1"/>
    <property type="molecule type" value="Genomic_RNA"/>
</dbReference>
<dbReference type="GlyCosmos" id="P68757">
    <property type="glycosylation" value="6 sites, No reported glycans"/>
</dbReference>
<dbReference type="GO" id="GO:0020002">
    <property type="term" value="C:host cell plasma membrane"/>
    <property type="evidence" value="ECO:0007669"/>
    <property type="project" value="UniProtKB-SubCell"/>
</dbReference>
<dbReference type="GO" id="GO:0016020">
    <property type="term" value="C:membrane"/>
    <property type="evidence" value="ECO:0007669"/>
    <property type="project" value="UniProtKB-KW"/>
</dbReference>
<dbReference type="GO" id="GO:0019031">
    <property type="term" value="C:viral envelope"/>
    <property type="evidence" value="ECO:0007669"/>
    <property type="project" value="UniProtKB-KW"/>
</dbReference>
<dbReference type="GO" id="GO:0055036">
    <property type="term" value="C:virion membrane"/>
    <property type="evidence" value="ECO:0007669"/>
    <property type="project" value="UniProtKB-SubCell"/>
</dbReference>
<dbReference type="GO" id="GO:0046789">
    <property type="term" value="F:host cell surface receptor binding"/>
    <property type="evidence" value="ECO:0007669"/>
    <property type="project" value="InterPro"/>
</dbReference>
<dbReference type="GO" id="GO:0039654">
    <property type="term" value="P:fusion of virus membrane with host endosome membrane"/>
    <property type="evidence" value="ECO:0007669"/>
    <property type="project" value="UniProtKB-KW"/>
</dbReference>
<dbReference type="GO" id="GO:0019064">
    <property type="term" value="P:fusion of virus membrane with host plasma membrane"/>
    <property type="evidence" value="ECO:0007669"/>
    <property type="project" value="InterPro"/>
</dbReference>
<dbReference type="GO" id="GO:0046718">
    <property type="term" value="P:symbiont entry into host cell"/>
    <property type="evidence" value="ECO:0007669"/>
    <property type="project" value="UniProtKB-KW"/>
</dbReference>
<dbReference type="GO" id="GO:0019062">
    <property type="term" value="P:virion attachment to host cell"/>
    <property type="evidence" value="ECO:0007669"/>
    <property type="project" value="UniProtKB-KW"/>
</dbReference>
<dbReference type="Gene3D" id="3.90.209.20">
    <property type="match status" value="1"/>
</dbReference>
<dbReference type="Gene3D" id="2.10.77.10">
    <property type="entry name" value="Hemagglutinin Chain A, Domain 2"/>
    <property type="match status" value="1"/>
</dbReference>
<dbReference type="InterPro" id="IPR008980">
    <property type="entry name" value="Capsid_hemagglutn"/>
</dbReference>
<dbReference type="InterPro" id="IPR013828">
    <property type="entry name" value="Hemagglutn_HA1_a/b_dom_sf"/>
</dbReference>
<dbReference type="InterPro" id="IPR001364">
    <property type="entry name" value="Hemagglutn_influenz_A/B"/>
</dbReference>
<dbReference type="Pfam" id="PF00509">
    <property type="entry name" value="Hemagglutinin"/>
    <property type="match status" value="1"/>
</dbReference>
<dbReference type="SUPFAM" id="SSF49818">
    <property type="entry name" value="Viral protein domain"/>
    <property type="match status" value="1"/>
</dbReference>
<comment type="function">
    <text>Binds to sialic acid-containing receptors on the cell surface, bringing about the attachment of the virus particle to the cell. Plays a major role in the determination of host range restriction and virulence. Class I viral fusion protein. Responsible for penetration of the virus into the cell cytoplasm by mediating the fusion of the membrane of the endocytosed virus particle with the endosomal membrane. Low pH in endosomes induce an irreversible conformational change in HA2, releasing the fusion hydrophobic peptide. Several trimers are required to form a competent fusion pore.</text>
</comment>
<comment type="subunit">
    <text>Homotrimer of disulfide-linked HA1-HA2.</text>
</comment>
<comment type="subcellular location">
    <subcellularLocation>
        <location evidence="3">Virion membrane</location>
        <topology evidence="3">Single-pass type I membrane protein</topology>
    </subcellularLocation>
    <subcellularLocation>
        <location>Host apical cell membrane</location>
        <topology>Single-pass type I membrane protein</topology>
    </subcellularLocation>
    <text>Targeted to the apical plasma membrane in epithelial polarized cells through a signal present in the transmembrane domain. Associated with glycosphingolipid- and cholesterol-enriched detergent-resistant lipid rafts.</text>
</comment>
<comment type="PTM">
    <text evidence="1">In natural infection, inactive HA is matured into HA1 and HA2 outside the cell by one or more trypsin-like, arginine-specific endoprotease secreted by the bronchial epithelial cells. One identified protease that may be involved in this process is secreted in lungs by club cells (By similarity).</text>
</comment>
<comment type="PTM">
    <text evidence="1">Palmitoylated.</text>
</comment>
<comment type="miscellaneous">
    <text>Major glycoprotein, comprises over 80% of the envelope proteins present in virus particle.</text>
</comment>
<comment type="miscellaneous">
    <text>The extent of infection into host organism is determined by HA. Influenza viruses bud from the apical surface of polarized epithelial cells (e.g. bronchial epithelial cells) into lumen of lungs and are therefore usually pneumotropic. The reason is that HA is cleaved by tryptase clara which is restricted to lungs. However, HAs of H5 and H7 pantropic avian viruses subtypes can be cleaved by furin and subtilisin-type enzymes, allowing the virus to grow in other organs than lungs.</text>
</comment>
<comment type="miscellaneous">
    <text>The influenza B genome consist of 8 RNA segments. Genetic variation of hemagglutinin and/or neuraminidase genes results in the emergence of new influenza strains. The mechanism of variation can be the result of point mutations or the result of genetic reassortment between segments of two different strains.</text>
</comment>
<comment type="similarity">
    <text evidence="3">Belongs to the influenza viruses hemagglutinin family.</text>
</comment>
<sequence>DRICTGITSSNSPHVVKTATQGEVNVTGVIPLTTTPTKSHFANLKGTKTRGKLCPKCLNCTDLDVALGRPKCMGTIPSAKASILHEVKPVTSGCFPIMHDRTKXRQLPNLLRGYENIRLSTHNVINAETAPGGPYKIGTSGSCPNITNGNGFFATMAWAVPKNDNNKTATNPLTVEVPYICTEGEDQITVWGFHSDNETQMVKLYGDSKPQKFTSSANGVTAHYVSQIGGFPNQAEDGGLPQSGRIVVDYMVQKSGKTGTITYQRGILLPQKVWCASGRSKVIKGSLPLIGEADCLHEKYGGLNKSKPYYTGEHAKAIGNCPIWVKTPLKLANGTKYRPPAKLLKER</sequence>
<accession>P68757</accession>
<accession>Q07922</accession>
<reference key="1">
    <citation type="journal article" date="1992" name="J. Gen. Virol.">
        <title>Evolution of influenza B/Victoria/2/87-like viruses: occurrence of a genetically conserved virus under conditions of low epidemic activity.</title>
        <authorList>
            <person name="Kinnunen L."/>
            <person name="Ikonen N."/>
            <person name="Poeyry T."/>
            <person name="Pyhaelae R."/>
        </authorList>
    </citation>
    <scope>NUCLEOTIDE SEQUENCE [GENOMIC RNA]</scope>
</reference>
<organism>
    <name type="scientific">Influenza B virus (strain B/Finland/147/1990)</name>
    <dbReference type="NCBI Taxonomy" id="38991"/>
    <lineage>
        <taxon>Viruses</taxon>
        <taxon>Riboviria</taxon>
        <taxon>Orthornavirae</taxon>
        <taxon>Negarnaviricota</taxon>
        <taxon>Polyploviricotina</taxon>
        <taxon>Insthoviricetes</taxon>
        <taxon>Articulavirales</taxon>
        <taxon>Orthomyxoviridae</taxon>
        <taxon>Betainfluenzavirus</taxon>
        <taxon>Betainfluenzavirus influenzae</taxon>
        <taxon>Influenza B virus</taxon>
    </lineage>
</organism>
<keyword id="KW-1015">Disulfide bond</keyword>
<keyword id="KW-1170">Fusion of virus membrane with host endosomal membrane</keyword>
<keyword id="KW-1168">Fusion of virus membrane with host membrane</keyword>
<keyword id="KW-0325">Glycoprotein</keyword>
<keyword id="KW-0348">Hemagglutinin</keyword>
<keyword id="KW-1032">Host cell membrane</keyword>
<keyword id="KW-1043">Host membrane</keyword>
<keyword id="KW-0945">Host-virus interaction</keyword>
<keyword id="KW-0449">Lipoprotein</keyword>
<keyword id="KW-0472">Membrane</keyword>
<keyword id="KW-0564">Palmitate</keyword>
<keyword id="KW-0812">Transmembrane</keyword>
<keyword id="KW-1161">Viral attachment to host cell</keyword>
<keyword id="KW-0261">Viral envelope protein</keyword>
<keyword id="KW-1162">Viral penetration into host cytoplasm</keyword>
<keyword id="KW-0946">Virion</keyword>
<keyword id="KW-1160">Virus entry into host cell</keyword>
<proteinExistence type="inferred from homology"/>
<evidence type="ECO:0000250" key="1"/>
<evidence type="ECO:0000255" key="2"/>
<evidence type="ECO:0000305" key="3"/>
<name>HEMA_INBF5</name>
<feature type="chain" id="PRO_0000039097" description="Hemagglutinin HA1 chain">
    <location>
        <begin position="1"/>
        <end position="346"/>
    </location>
</feature>
<feature type="glycosylation site" description="N-linked (GlcNAc...) asparagine; by host" evidence="2">
    <location>
        <position position="25"/>
    </location>
</feature>
<feature type="glycosylation site" description="N-linked (GlcNAc...) asparagine; by host" evidence="2">
    <location>
        <position position="59"/>
    </location>
</feature>
<feature type="glycosylation site" description="N-linked (GlcNAc...) asparagine; by host" evidence="2">
    <location>
        <position position="145"/>
    </location>
</feature>
<feature type="glycosylation site" description="N-linked (GlcNAc...) asparagine; by host" evidence="2">
    <location>
        <position position="166"/>
    </location>
</feature>
<feature type="glycosylation site" description="N-linked (GlcNAc...) asparagine; by host" evidence="2">
    <location>
        <position position="304"/>
    </location>
</feature>
<feature type="glycosylation site" description="N-linked (GlcNAc...) asparagine; by host" evidence="2">
    <location>
        <position position="333"/>
    </location>
</feature>
<feature type="non-terminal residue">
    <location>
        <position position="1"/>
    </location>
</feature>
<feature type="non-terminal residue">
    <location>
        <position position="347"/>
    </location>
</feature>
<gene>
    <name type="primary">HA</name>
</gene>
<organismHost>
    <name type="scientific">Homo sapiens</name>
    <name type="common">Human</name>
    <dbReference type="NCBI Taxonomy" id="9606"/>
</organismHost>